<reference key="1">
    <citation type="journal article" date="2009" name="PLoS Genet.">
        <title>Organised genome dynamics in the Escherichia coli species results in highly diverse adaptive paths.</title>
        <authorList>
            <person name="Touchon M."/>
            <person name="Hoede C."/>
            <person name="Tenaillon O."/>
            <person name="Barbe V."/>
            <person name="Baeriswyl S."/>
            <person name="Bidet P."/>
            <person name="Bingen E."/>
            <person name="Bonacorsi S."/>
            <person name="Bouchier C."/>
            <person name="Bouvet O."/>
            <person name="Calteau A."/>
            <person name="Chiapello H."/>
            <person name="Clermont O."/>
            <person name="Cruveiller S."/>
            <person name="Danchin A."/>
            <person name="Diard M."/>
            <person name="Dossat C."/>
            <person name="Karoui M.E."/>
            <person name="Frapy E."/>
            <person name="Garry L."/>
            <person name="Ghigo J.M."/>
            <person name="Gilles A.M."/>
            <person name="Johnson J."/>
            <person name="Le Bouguenec C."/>
            <person name="Lescat M."/>
            <person name="Mangenot S."/>
            <person name="Martinez-Jehanne V."/>
            <person name="Matic I."/>
            <person name="Nassif X."/>
            <person name="Oztas S."/>
            <person name="Petit M.A."/>
            <person name="Pichon C."/>
            <person name="Rouy Z."/>
            <person name="Ruf C.S."/>
            <person name="Schneider D."/>
            <person name="Tourret J."/>
            <person name="Vacherie B."/>
            <person name="Vallenet D."/>
            <person name="Medigue C."/>
            <person name="Rocha E.P.C."/>
            <person name="Denamur E."/>
        </authorList>
    </citation>
    <scope>NUCLEOTIDE SEQUENCE [LARGE SCALE GENOMIC DNA]</scope>
    <source>
        <strain>S88 / ExPEC</strain>
    </source>
</reference>
<protein>
    <recommendedName>
        <fullName evidence="1">Glycerol-3-phosphate acyltransferase</fullName>
        <shortName evidence="1">GPAT</shortName>
        <ecNumber evidence="1">2.3.1.15</ecNumber>
    </recommendedName>
</protein>
<evidence type="ECO:0000255" key="1">
    <source>
        <dbReference type="HAMAP-Rule" id="MF_00393"/>
    </source>
</evidence>
<sequence>MSGWPRIYYKLLNLPLSILVKSKSIPADPAPELGLDTSRPIMYVLPYNSKADLLTLRAQCLAHDLPDPLEPLEIDGTLLPRYVFIHGGPRVFTYYTPKEESIKLFHDYLDLHRSNPNLDVQMVPVSVMFGRAPGREKGEVNPPLRMLNGVQKFFAVLWLGRDSFVRFSPSVSLRRMADEHGTDKTIAQKLARVARMHFARQRLAAVGPRLPARQDLFNKLLASRAIAKAVEDEARSKKISHEKAQQNAIALMEEIAANFSYEMIRLTDRILGFTWNRLYQGINVHNAERVRQLAHDGHELVYVPCHRSHMDYLLLSYVLYHQGLVPPHIAAGINLNFWPAGPIFRRLGAFFIRRTFKGNKLYSTVFREYLGELFSRGYSVEYFVEGGRSRTGRLLDPKTGTLSMTIQAMLRGGTRPITLIPIYIGYEHVMEVGTYAKELRGATKEKESLPQMLRGLSKLRNLGQGYVNFGEPMPLMTYLNQHVPDWRESIDPIEAVRPAWLTPTVNNIAADLMVRINNAGAANAMNLCCTALLASRQRSLTREQLTEQLNCYLDLMRNVPYSTDSTVPSASASELIDHALQMNKFEVEKDTIGDIIILPREQAVLMTYYRNNIAHMLVLPSLMAAIVTQHRHISRDVLMEHVNVLYPMLKAELFLRWDRDELPDVIDALANEMQRQGLITLQDDELHINPAHSRTLQLLAAGARETLQRYAITFWLLSANPSINRGTLEKESRTVAQRLSVLHGINAPEFFDKAVFSSLVLTLRDEGYISDSGDAEPAETMKVYQLLAELITSDVRLTIESATQGEG</sequence>
<keyword id="KW-0012">Acyltransferase</keyword>
<keyword id="KW-0997">Cell inner membrane</keyword>
<keyword id="KW-1003">Cell membrane</keyword>
<keyword id="KW-0444">Lipid biosynthesis</keyword>
<keyword id="KW-0443">Lipid metabolism</keyword>
<keyword id="KW-0472">Membrane</keyword>
<keyword id="KW-0594">Phospholipid biosynthesis</keyword>
<keyword id="KW-1208">Phospholipid metabolism</keyword>
<keyword id="KW-1185">Reference proteome</keyword>
<keyword id="KW-0808">Transferase</keyword>
<organism>
    <name type="scientific">Escherichia coli O45:K1 (strain S88 / ExPEC)</name>
    <dbReference type="NCBI Taxonomy" id="585035"/>
    <lineage>
        <taxon>Bacteria</taxon>
        <taxon>Pseudomonadati</taxon>
        <taxon>Pseudomonadota</taxon>
        <taxon>Gammaproteobacteria</taxon>
        <taxon>Enterobacterales</taxon>
        <taxon>Enterobacteriaceae</taxon>
        <taxon>Escherichia</taxon>
    </lineage>
</organism>
<accession>B7MJ31</accession>
<name>PLSB_ECO45</name>
<proteinExistence type="inferred from homology"/>
<feature type="chain" id="PRO_1000123075" description="Glycerol-3-phosphate acyltransferase">
    <location>
        <begin position="1"/>
        <end position="807"/>
    </location>
</feature>
<feature type="short sequence motif" description="HXXXXD motif">
    <location>
        <begin position="305"/>
        <end position="310"/>
    </location>
</feature>
<dbReference type="EC" id="2.3.1.15" evidence="1"/>
<dbReference type="EMBL" id="CU928161">
    <property type="protein sequence ID" value="CAR05675.1"/>
    <property type="molecule type" value="Genomic_DNA"/>
</dbReference>
<dbReference type="RefSeq" id="WP_000017354.1">
    <property type="nucleotide sequence ID" value="NC_011742.1"/>
</dbReference>
<dbReference type="SMR" id="B7MJ31"/>
<dbReference type="GeneID" id="75204185"/>
<dbReference type="KEGG" id="ecz:ECS88_4514"/>
<dbReference type="HOGENOM" id="CLU_015407_0_0_6"/>
<dbReference type="UniPathway" id="UPA00557">
    <property type="reaction ID" value="UER00612"/>
</dbReference>
<dbReference type="Proteomes" id="UP000000747">
    <property type="component" value="Chromosome"/>
</dbReference>
<dbReference type="GO" id="GO:0005886">
    <property type="term" value="C:plasma membrane"/>
    <property type="evidence" value="ECO:0007669"/>
    <property type="project" value="UniProtKB-SubCell"/>
</dbReference>
<dbReference type="GO" id="GO:0004366">
    <property type="term" value="F:glycerol-3-phosphate O-acyltransferase activity"/>
    <property type="evidence" value="ECO:0007669"/>
    <property type="project" value="UniProtKB-UniRule"/>
</dbReference>
<dbReference type="GO" id="GO:0016024">
    <property type="term" value="P:CDP-diacylglycerol biosynthetic process"/>
    <property type="evidence" value="ECO:0007669"/>
    <property type="project" value="UniProtKB-UniRule"/>
</dbReference>
<dbReference type="GO" id="GO:0006631">
    <property type="term" value="P:fatty acid metabolic process"/>
    <property type="evidence" value="ECO:0007669"/>
    <property type="project" value="TreeGrafter"/>
</dbReference>
<dbReference type="CDD" id="cd07993">
    <property type="entry name" value="LPLAT_DHAPAT-like"/>
    <property type="match status" value="1"/>
</dbReference>
<dbReference type="HAMAP" id="MF_00393">
    <property type="entry name" value="Glyc3P_acyltrans"/>
    <property type="match status" value="1"/>
</dbReference>
<dbReference type="InterPro" id="IPR022284">
    <property type="entry name" value="GPAT/DHAPAT"/>
</dbReference>
<dbReference type="InterPro" id="IPR045520">
    <property type="entry name" value="GPAT/DHAPAT_C"/>
</dbReference>
<dbReference type="InterPro" id="IPR041728">
    <property type="entry name" value="GPAT/DHAPAT_LPLAT"/>
</dbReference>
<dbReference type="InterPro" id="IPR028354">
    <property type="entry name" value="GPAT_PlsB"/>
</dbReference>
<dbReference type="InterPro" id="IPR002123">
    <property type="entry name" value="Plipid/glycerol_acylTrfase"/>
</dbReference>
<dbReference type="NCBIfam" id="TIGR03703">
    <property type="entry name" value="plsB"/>
    <property type="match status" value="1"/>
</dbReference>
<dbReference type="NCBIfam" id="NF003441">
    <property type="entry name" value="PRK04974.1"/>
    <property type="match status" value="1"/>
</dbReference>
<dbReference type="PANTHER" id="PTHR12563:SF17">
    <property type="entry name" value="DIHYDROXYACETONE PHOSPHATE ACYLTRANSFERASE"/>
    <property type="match status" value="1"/>
</dbReference>
<dbReference type="PANTHER" id="PTHR12563">
    <property type="entry name" value="GLYCEROL-3-PHOSPHATE ACYLTRANSFERASE"/>
    <property type="match status" value="1"/>
</dbReference>
<dbReference type="Pfam" id="PF01553">
    <property type="entry name" value="Acyltransferase"/>
    <property type="match status" value="1"/>
</dbReference>
<dbReference type="Pfam" id="PF19277">
    <property type="entry name" value="GPAT_C"/>
    <property type="match status" value="1"/>
</dbReference>
<dbReference type="PIRSF" id="PIRSF500064">
    <property type="entry name" value="GPAT"/>
    <property type="match status" value="1"/>
</dbReference>
<dbReference type="PIRSF" id="PIRSF000437">
    <property type="entry name" value="GPAT_DHAPAT"/>
    <property type="match status" value="1"/>
</dbReference>
<dbReference type="SMART" id="SM00563">
    <property type="entry name" value="PlsC"/>
    <property type="match status" value="1"/>
</dbReference>
<dbReference type="SUPFAM" id="SSF69593">
    <property type="entry name" value="Glycerol-3-phosphate (1)-acyltransferase"/>
    <property type="match status" value="1"/>
</dbReference>
<gene>
    <name evidence="1" type="primary">plsB</name>
    <name type="ordered locus">ECS88_4514</name>
</gene>
<comment type="catalytic activity">
    <reaction evidence="1">
        <text>sn-glycerol 3-phosphate + an acyl-CoA = a 1-acyl-sn-glycero-3-phosphate + CoA</text>
        <dbReference type="Rhea" id="RHEA:15325"/>
        <dbReference type="ChEBI" id="CHEBI:57287"/>
        <dbReference type="ChEBI" id="CHEBI:57597"/>
        <dbReference type="ChEBI" id="CHEBI:57970"/>
        <dbReference type="ChEBI" id="CHEBI:58342"/>
        <dbReference type="EC" id="2.3.1.15"/>
    </reaction>
</comment>
<comment type="pathway">
    <text evidence="1">Phospholipid metabolism; CDP-diacylglycerol biosynthesis; CDP-diacylglycerol from sn-glycerol 3-phosphate: step 1/3.</text>
</comment>
<comment type="subcellular location">
    <subcellularLocation>
        <location evidence="1">Cell inner membrane</location>
        <topology evidence="1">Peripheral membrane protein</topology>
        <orientation evidence="1">Cytoplasmic side</orientation>
    </subcellularLocation>
</comment>
<comment type="domain">
    <text evidence="1">The HXXXXD motif is essential for acyltransferase activity and may constitute the binding site for the phosphate moiety of the glycerol-3-phosphate.</text>
</comment>
<comment type="similarity">
    <text evidence="1">Belongs to the GPAT/DAPAT family.</text>
</comment>